<gene>
    <name evidence="1" type="primary">sdhaf2</name>
    <name type="synonym">pgl2</name>
    <name type="synonym">sdh5</name>
    <name type="ORF">zgc:163000</name>
</gene>
<keyword id="KW-0143">Chaperone</keyword>
<keyword id="KW-0496">Mitochondrion</keyword>
<keyword id="KW-1185">Reference proteome</keyword>
<keyword id="KW-0809">Transit peptide</keyword>
<protein>
    <recommendedName>
        <fullName evidence="1">Succinate dehydrogenase assembly factor 2, mitochondrial</fullName>
        <shortName evidence="1">SDH assembly factor 2</shortName>
        <shortName evidence="1">SDHAF2</shortName>
    </recommendedName>
</protein>
<reference key="1">
    <citation type="submission" date="2007-03" db="EMBL/GenBank/DDBJ databases">
        <authorList>
            <consortium name="NIH - Zebrafish Gene Collection (ZGC) project"/>
        </authorList>
    </citation>
    <scope>NUCLEOTIDE SEQUENCE [LARGE SCALE MRNA]</scope>
    <source>
        <tissue>Larval eye</tissue>
    </source>
</reference>
<feature type="transit peptide" description="Mitochondrion" evidence="1">
    <location>
        <begin position="1"/>
        <end position="17"/>
    </location>
</feature>
<feature type="chain" id="PRO_0000294361" description="Succinate dehydrogenase assembly factor 2, mitochondrial">
    <location>
        <begin position="18"/>
        <end position="158"/>
    </location>
</feature>
<name>SDHF2_DANRE</name>
<sequence length="158" mass="18476">MFSANIARKVVCSVCRASLRPTVCPVVYRGYRGDAPEPTILEIPLPPWQERAGEALDIKRKRLLYESRKRGMLENCILLSLFAKQYLNTMSESQLKQYDRLINEPSNDWDIYYWATDTQPTPEVYQGEVMDMLKEFTKNRDMEQRLDAPNLEYLDKSS</sequence>
<evidence type="ECO:0000255" key="1">
    <source>
        <dbReference type="HAMAP-Rule" id="MF_03057"/>
    </source>
</evidence>
<proteinExistence type="evidence at transcript level"/>
<dbReference type="EMBL" id="BC134190">
    <property type="protein sequence ID" value="AAI34191.1"/>
    <property type="molecule type" value="mRNA"/>
</dbReference>
<dbReference type="RefSeq" id="NP_001076333.1">
    <property type="nucleotide sequence ID" value="NM_001082864.1"/>
</dbReference>
<dbReference type="SMR" id="A3KP74"/>
<dbReference type="FunCoup" id="A3KP74">
    <property type="interactions" value="965"/>
</dbReference>
<dbReference type="STRING" id="7955.ENSDARP00000086049"/>
<dbReference type="PaxDb" id="7955-ENSDARP00000086049"/>
<dbReference type="PeptideAtlas" id="A3KP74"/>
<dbReference type="Ensembl" id="ENSDART00000091616">
    <property type="protein sequence ID" value="ENSDARP00000086049"/>
    <property type="gene ID" value="ENSDARG00000062971"/>
</dbReference>
<dbReference type="Ensembl" id="ENSDART00000191904">
    <property type="protein sequence ID" value="ENSDARP00000144692"/>
    <property type="gene ID" value="ENSDARG00000114840"/>
</dbReference>
<dbReference type="GeneID" id="569482"/>
<dbReference type="KEGG" id="dre:569482"/>
<dbReference type="AGR" id="ZFIN:ZDB-GENE-030131-7564"/>
<dbReference type="CTD" id="54949"/>
<dbReference type="ZFIN" id="ZDB-GENE-030131-7564">
    <property type="gene designation" value="sdhaf2"/>
</dbReference>
<dbReference type="eggNOG" id="KOG3326">
    <property type="taxonomic scope" value="Eukaryota"/>
</dbReference>
<dbReference type="HOGENOM" id="CLU_103054_0_2_1"/>
<dbReference type="InParanoid" id="A3KP74"/>
<dbReference type="OMA" id="YGKPQNP"/>
<dbReference type="OrthoDB" id="284292at2759"/>
<dbReference type="PhylomeDB" id="A3KP74"/>
<dbReference type="TreeFam" id="TF300175"/>
<dbReference type="Reactome" id="R-DRE-9854311">
    <property type="pathway name" value="Maturation of TCA enzymes and regulation of TCA cycle"/>
</dbReference>
<dbReference type="PRO" id="PR:A3KP74"/>
<dbReference type="Proteomes" id="UP000000437">
    <property type="component" value="Alternate scaffold 7"/>
</dbReference>
<dbReference type="Proteomes" id="UP000000437">
    <property type="component" value="Chromosome 7"/>
</dbReference>
<dbReference type="Bgee" id="ENSDARG00000062971">
    <property type="expression patterns" value="Expressed in cardiac ventricle and 25 other cell types or tissues"/>
</dbReference>
<dbReference type="GO" id="GO:0005759">
    <property type="term" value="C:mitochondrial matrix"/>
    <property type="evidence" value="ECO:0007669"/>
    <property type="project" value="UniProtKB-SubCell"/>
</dbReference>
<dbReference type="GO" id="GO:0005739">
    <property type="term" value="C:mitochondrion"/>
    <property type="evidence" value="ECO:0000250"/>
    <property type="project" value="UniProtKB"/>
</dbReference>
<dbReference type="GO" id="GO:0006121">
    <property type="term" value="P:mitochondrial electron transport, succinate to ubiquinone"/>
    <property type="evidence" value="ECO:0000250"/>
    <property type="project" value="UniProtKB"/>
</dbReference>
<dbReference type="GO" id="GO:0034553">
    <property type="term" value="P:mitochondrial respiratory chain complex II assembly"/>
    <property type="evidence" value="ECO:0000318"/>
    <property type="project" value="GO_Central"/>
</dbReference>
<dbReference type="GO" id="GO:0018293">
    <property type="term" value="P:protein-FAD linkage"/>
    <property type="evidence" value="ECO:0000250"/>
    <property type="project" value="UniProtKB"/>
</dbReference>
<dbReference type="GO" id="GO:0006099">
    <property type="term" value="P:tricarboxylic acid cycle"/>
    <property type="evidence" value="ECO:0000318"/>
    <property type="project" value="GO_Central"/>
</dbReference>
<dbReference type="FunFam" id="1.10.150.250:FF:000002">
    <property type="entry name" value="Succinate dehydrogenase assembly factor 2, mitochondrial"/>
    <property type="match status" value="1"/>
</dbReference>
<dbReference type="Gene3D" id="1.10.150.250">
    <property type="entry name" value="Flavinator of succinate dehydrogenase"/>
    <property type="match status" value="1"/>
</dbReference>
<dbReference type="HAMAP" id="MF_03057">
    <property type="entry name" value="SDHAF2"/>
    <property type="match status" value="1"/>
</dbReference>
<dbReference type="InterPro" id="IPR005631">
    <property type="entry name" value="SDH"/>
</dbReference>
<dbReference type="InterPro" id="IPR036714">
    <property type="entry name" value="SDH_sf"/>
</dbReference>
<dbReference type="InterPro" id="IPR028882">
    <property type="entry name" value="SDHAF2"/>
</dbReference>
<dbReference type="PANTHER" id="PTHR12469">
    <property type="entry name" value="PROTEIN EMI5 HOMOLOG, MITOCHONDRIAL"/>
    <property type="match status" value="1"/>
</dbReference>
<dbReference type="PANTHER" id="PTHR12469:SF2">
    <property type="entry name" value="SUCCINATE DEHYDROGENASE ASSEMBLY FACTOR 2, MITOCHONDRIAL"/>
    <property type="match status" value="1"/>
</dbReference>
<dbReference type="Pfam" id="PF03937">
    <property type="entry name" value="Sdh5"/>
    <property type="match status" value="1"/>
</dbReference>
<dbReference type="SUPFAM" id="SSF109910">
    <property type="entry name" value="YgfY-like"/>
    <property type="match status" value="1"/>
</dbReference>
<accession>A3KP74</accession>
<comment type="function">
    <text evidence="1">Plays an essential role in the assembly of succinate dehydrogenase (SDH), an enzyme complex (also referred to as respiratory complex II) that is a component of both the tricarboxylic acid (TCA) cycle and the mitochondrial electron transport chain, and which couples the oxidation of succinate to fumarate with the reduction of ubiquinone (coenzyme Q) to ubiquinol. Required for flavinylation (covalent attachment of FAD) of the flavoprotein subunit sdha of the SDH catalytic dimer.</text>
</comment>
<comment type="subunit">
    <text evidence="1">Interacts with sdha within the SDH catalytic dimer.</text>
</comment>
<comment type="subcellular location">
    <subcellularLocation>
        <location evidence="1">Mitochondrion matrix</location>
    </subcellularLocation>
</comment>
<comment type="similarity">
    <text evidence="1">Belongs to the SDHAF2 family.</text>
</comment>
<organism>
    <name type="scientific">Danio rerio</name>
    <name type="common">Zebrafish</name>
    <name type="synonym">Brachydanio rerio</name>
    <dbReference type="NCBI Taxonomy" id="7955"/>
    <lineage>
        <taxon>Eukaryota</taxon>
        <taxon>Metazoa</taxon>
        <taxon>Chordata</taxon>
        <taxon>Craniata</taxon>
        <taxon>Vertebrata</taxon>
        <taxon>Euteleostomi</taxon>
        <taxon>Actinopterygii</taxon>
        <taxon>Neopterygii</taxon>
        <taxon>Teleostei</taxon>
        <taxon>Ostariophysi</taxon>
        <taxon>Cypriniformes</taxon>
        <taxon>Danionidae</taxon>
        <taxon>Danioninae</taxon>
        <taxon>Danio</taxon>
    </lineage>
</organism>